<accession>A7I773</accession>
<sequence length="236" mass="24825">MRIFPAVDILGGRCVQLVQGKRESATAYGDPLTCARRWIDAGADALHVVNLDGAFGDSAKNADLIRGLVKETGIEIELGGGIRSVEDAARWLDTGASRIILSTFAIKEPESIRTLSQEFGSDRVMAGVDAKGGQVAIHGWQETAGDYIGWAQRFEQLGAGFLLYTNVDVEGLQGGIAAGPVRRLIGNVRIPVVVAGGVSARADVALLKESGAYGAVLGSALYSGKINLSEALEESR</sequence>
<proteinExistence type="inferred from homology"/>
<feature type="chain" id="PRO_1000063217" description="1-(5-phosphoribosyl)-5-[(5-phosphoribosylamino)methylideneamino] imidazole-4-carboxamide isomerase">
    <location>
        <begin position="1"/>
        <end position="236"/>
    </location>
</feature>
<feature type="active site" description="Proton acceptor" evidence="1">
    <location>
        <position position="8"/>
    </location>
</feature>
<feature type="active site" description="Proton donor" evidence="1">
    <location>
        <position position="129"/>
    </location>
</feature>
<name>HIS4_METB6</name>
<keyword id="KW-0028">Amino-acid biosynthesis</keyword>
<keyword id="KW-0963">Cytoplasm</keyword>
<keyword id="KW-0368">Histidine biosynthesis</keyword>
<keyword id="KW-0413">Isomerase</keyword>
<keyword id="KW-1185">Reference proteome</keyword>
<evidence type="ECO:0000255" key="1">
    <source>
        <dbReference type="HAMAP-Rule" id="MF_01014"/>
    </source>
</evidence>
<organism>
    <name type="scientific">Methanoregula boonei (strain DSM 21154 / JCM 14090 / 6A8)</name>
    <dbReference type="NCBI Taxonomy" id="456442"/>
    <lineage>
        <taxon>Archaea</taxon>
        <taxon>Methanobacteriati</taxon>
        <taxon>Methanobacteriota</taxon>
        <taxon>Stenosarchaea group</taxon>
        <taxon>Methanomicrobia</taxon>
        <taxon>Methanomicrobiales</taxon>
        <taxon>Methanoregulaceae</taxon>
        <taxon>Methanoregula</taxon>
    </lineage>
</organism>
<reference key="1">
    <citation type="journal article" date="2015" name="Microbiology">
        <title>Genome of Methanoregula boonei 6A8 reveals adaptations to oligotrophic peatland environments.</title>
        <authorList>
            <person name="Braeuer S."/>
            <person name="Cadillo-Quiroz H."/>
            <person name="Kyrpides N."/>
            <person name="Woyke T."/>
            <person name="Goodwin L."/>
            <person name="Detter C."/>
            <person name="Podell S."/>
            <person name="Yavitt J.B."/>
            <person name="Zinder S.H."/>
        </authorList>
    </citation>
    <scope>NUCLEOTIDE SEQUENCE [LARGE SCALE GENOMIC DNA]</scope>
    <source>
        <strain>DSM 21154 / JCM 14090 / 6A8</strain>
    </source>
</reference>
<gene>
    <name evidence="1" type="primary">hisA</name>
    <name type="ordered locus">Mboo_1066</name>
</gene>
<protein>
    <recommendedName>
        <fullName evidence="1">1-(5-phosphoribosyl)-5-[(5-phosphoribosylamino)methylideneamino] imidazole-4-carboxamide isomerase</fullName>
        <ecNumber evidence="1">5.3.1.16</ecNumber>
    </recommendedName>
    <alternativeName>
        <fullName evidence="1">Phosphoribosylformimino-5-aminoimidazole carboxamide ribotide isomerase</fullName>
    </alternativeName>
</protein>
<dbReference type="EC" id="5.3.1.16" evidence="1"/>
<dbReference type="EMBL" id="CP000780">
    <property type="protein sequence ID" value="ABS55584.1"/>
    <property type="molecule type" value="Genomic_DNA"/>
</dbReference>
<dbReference type="RefSeq" id="WP_012106611.1">
    <property type="nucleotide sequence ID" value="NC_009712.1"/>
</dbReference>
<dbReference type="SMR" id="A7I773"/>
<dbReference type="STRING" id="456442.Mboo_1066"/>
<dbReference type="GeneID" id="5409794"/>
<dbReference type="KEGG" id="mbn:Mboo_1066"/>
<dbReference type="eggNOG" id="arCOG00618">
    <property type="taxonomic scope" value="Archaea"/>
</dbReference>
<dbReference type="HOGENOM" id="CLU_048577_1_1_2"/>
<dbReference type="OrthoDB" id="52866at2157"/>
<dbReference type="UniPathway" id="UPA00031">
    <property type="reaction ID" value="UER00009"/>
</dbReference>
<dbReference type="Proteomes" id="UP000002408">
    <property type="component" value="Chromosome"/>
</dbReference>
<dbReference type="GO" id="GO:0005737">
    <property type="term" value="C:cytoplasm"/>
    <property type="evidence" value="ECO:0007669"/>
    <property type="project" value="UniProtKB-SubCell"/>
</dbReference>
<dbReference type="GO" id="GO:0003949">
    <property type="term" value="F:1-(5-phosphoribosyl)-5-[(5-phosphoribosylamino)methylideneamino]imidazole-4-carboxamide isomerase activity"/>
    <property type="evidence" value="ECO:0007669"/>
    <property type="project" value="UniProtKB-UniRule"/>
</dbReference>
<dbReference type="GO" id="GO:0000105">
    <property type="term" value="P:L-histidine biosynthetic process"/>
    <property type="evidence" value="ECO:0007669"/>
    <property type="project" value="UniProtKB-UniRule"/>
</dbReference>
<dbReference type="GO" id="GO:0000162">
    <property type="term" value="P:L-tryptophan biosynthetic process"/>
    <property type="evidence" value="ECO:0007669"/>
    <property type="project" value="TreeGrafter"/>
</dbReference>
<dbReference type="CDD" id="cd04732">
    <property type="entry name" value="HisA"/>
    <property type="match status" value="1"/>
</dbReference>
<dbReference type="FunFam" id="3.20.20.70:FF:000009">
    <property type="entry name" value="1-(5-phosphoribosyl)-5-[(5-phosphoribosylamino)methylideneamino] imidazole-4-carboxamide isomerase"/>
    <property type="match status" value="1"/>
</dbReference>
<dbReference type="Gene3D" id="3.20.20.70">
    <property type="entry name" value="Aldolase class I"/>
    <property type="match status" value="1"/>
</dbReference>
<dbReference type="HAMAP" id="MF_01014">
    <property type="entry name" value="HisA"/>
    <property type="match status" value="1"/>
</dbReference>
<dbReference type="InterPro" id="IPR013785">
    <property type="entry name" value="Aldolase_TIM"/>
</dbReference>
<dbReference type="InterPro" id="IPR006062">
    <property type="entry name" value="His_biosynth"/>
</dbReference>
<dbReference type="InterPro" id="IPR006063">
    <property type="entry name" value="HisA_bact_arch"/>
</dbReference>
<dbReference type="InterPro" id="IPR044524">
    <property type="entry name" value="Isoase_HisA-like"/>
</dbReference>
<dbReference type="InterPro" id="IPR023016">
    <property type="entry name" value="Isoase_HisA-like_bact"/>
</dbReference>
<dbReference type="InterPro" id="IPR011060">
    <property type="entry name" value="RibuloseP-bd_barrel"/>
</dbReference>
<dbReference type="NCBIfam" id="TIGR00007">
    <property type="entry name" value="1-(5-phosphoribosyl)-5-[(5-phosphoribosylamino)methylideneamino]imidazole-4-carboxamide isomerase"/>
    <property type="match status" value="1"/>
</dbReference>
<dbReference type="NCBIfam" id="NF010112">
    <property type="entry name" value="PRK13585.1"/>
    <property type="match status" value="1"/>
</dbReference>
<dbReference type="PANTHER" id="PTHR43090">
    <property type="entry name" value="1-(5-PHOSPHORIBOSYL)-5-[(5-PHOSPHORIBOSYLAMINO)METHYLIDENEAMINO] IMIDAZOLE-4-CARBOXAMIDE ISOMERASE"/>
    <property type="match status" value="1"/>
</dbReference>
<dbReference type="PANTHER" id="PTHR43090:SF7">
    <property type="entry name" value="1-(5-PHOSPHORIBOSYL)-5-[(5-PHOSPHORIBOSYLAMINO)METHYLIDENEAMINO] IMIDAZOLE-4-CARBOXAMIDE ISOMERASE"/>
    <property type="match status" value="1"/>
</dbReference>
<dbReference type="Pfam" id="PF00977">
    <property type="entry name" value="His_biosynth"/>
    <property type="match status" value="1"/>
</dbReference>
<dbReference type="SUPFAM" id="SSF51366">
    <property type="entry name" value="Ribulose-phoshate binding barrel"/>
    <property type="match status" value="1"/>
</dbReference>
<comment type="catalytic activity">
    <reaction evidence="1">
        <text>1-(5-phospho-beta-D-ribosyl)-5-[(5-phospho-beta-D-ribosylamino)methylideneamino]imidazole-4-carboxamide = 5-[(5-phospho-1-deoxy-D-ribulos-1-ylimino)methylamino]-1-(5-phospho-beta-D-ribosyl)imidazole-4-carboxamide</text>
        <dbReference type="Rhea" id="RHEA:15469"/>
        <dbReference type="ChEBI" id="CHEBI:58435"/>
        <dbReference type="ChEBI" id="CHEBI:58525"/>
        <dbReference type="EC" id="5.3.1.16"/>
    </reaction>
</comment>
<comment type="pathway">
    <text evidence="1">Amino-acid biosynthesis; L-histidine biosynthesis; L-histidine from 5-phospho-alpha-D-ribose 1-diphosphate: step 4/9.</text>
</comment>
<comment type="subcellular location">
    <subcellularLocation>
        <location evidence="1">Cytoplasm</location>
    </subcellularLocation>
</comment>
<comment type="similarity">
    <text evidence="1">Belongs to the HisA/HisF family.</text>
</comment>